<sequence>MSNTFEESLKSMSLDYLNLLINGQAFSDVTFSVEGRLVHAHRCILAARSLFFRKFFCESDPSQPGAEPANQTGSGARAAAVGGVIPVNSVGYEVFLLLLQFLYSGQVSIVPHKHEPRSNCGDRGCWHTHCTAAVDLSLDILAAARYFGVEQLALLTQKHLTSMVEKASIEDVMKVLIASRKQDMHQLWTTCSYLIAKSGLPQEILAKHLPIELVAKIEELRLKSSMPLRSLMPHHHDLTSTLDLEDQKIRRMRRALDSSDVELVKLMVMGEGLNLDESLALIYAVENCSREVVKALLELGAADVNYPAGPTGKTALHIAAEMVSPDMVAVLLDHHADPNVQTVDGITPLDILRTLTSDFLFKGAIPGLTHIEPNKLRLCLELVQSAALVISREEGNNNSNDNNTMIYPRMKDEHTSGSSLDSRLVYLNLGATNRDIGDDNSNQREGMNLHHHHHDPSTMYHHHHHHF</sequence>
<gene>
    <name evidence="17" type="primary">NPR6</name>
    <name evidence="16" type="synonym">BOP1</name>
    <name evidence="19" type="ordered locus">At3g57130</name>
    <name evidence="20" type="ORF">F24I3.210</name>
</gene>
<protein>
    <recommendedName>
        <fullName evidence="17">Regulatory protein NPR6</fullName>
    </recommendedName>
    <alternativeName>
        <fullName evidence="17">BTB/POZ domain-containing protein NPR6</fullName>
    </alternativeName>
    <alternativeName>
        <fullName evidence="16">Protein BLADE-ON-PETIOLE 1</fullName>
    </alternativeName>
</protein>
<comment type="function">
    <text evidence="1 6 7 9 10 11 12 13 14 15">May act as a substrate-specific adapter of an E3 ubiquitin-protein ligase complex (CUL3-RBX1-BTB) which mediates the ubiquitination and subsequent proteasomal degradation of target proteins (By similarity). Acts redundantly with BOP2. BOP1/2 promote leaf and floral meristem fate and determinacy in a pathway targeting AP1 and AGL24. BOP1/2 act as transcriptional co-regulators through direct interaction with TGA factors, including PAN, a direct regulator of AP1. Controls lateral organ fate through positive regulation of adaxial-abaxial polarity genes ATHB-14/PHB, YAB1/FIL and YAB3, and through positive regulation of LOB domain-containing genes LOB, LBD6/AS2 and LBD36. Promotes and maintains a developmentally determinate state in leaf cells through the negative regulation of JAG, JGL and class I KNOX genes. Is also involved in nectary development, formation of normal abscission zones (AZs) and suppression of bract formation, probably by regulating the cell wall disorganization.</text>
</comment>
<comment type="pathway">
    <text evidence="1">Protein modification; protein ubiquitination.</text>
</comment>
<comment type="subunit">
    <text evidence="10 13">Homodimer or heterodimer with BOP2. Interacts with PAN.</text>
</comment>
<comment type="subcellular location">
    <subcellularLocation>
        <location evidence="13">Cytoplasm</location>
    </subcellularLocation>
    <subcellularLocation>
        <location evidence="13">Nucleus</location>
    </subcellularLocation>
</comment>
<comment type="alternative products">
    <event type="alternative splicing"/>
    <isoform>
        <id>Q9M1I7-1</id>
        <name>1</name>
        <sequence type="displayed"/>
    </isoform>
    <text>A number of isoforms are produced. According to EST sequences.</text>
</comment>
<comment type="developmental stage">
    <text evidence="7">Initially detectable in embryos with a localization to the base of the developing cotyledons near the SAM. Expressed during vegetative development in young leaf primordia and at the base of the rosette leaves on the adaxial side. Expressed during reproductive development in young floral buds, and at the base of the sepals and petals.</text>
</comment>
<comment type="domain">
    <text evidence="8">The BTB/POZ domain mediates the interaction with some component of ubiquitin ligase complexes.</text>
</comment>
<comment type="disruption phenotype">
    <text evidence="9 10 11 12">Defects in rosette leaf development. bop1 and bop2 double mutant displays leafy petioles, loss of floral organ abscission, and asymmetric flowers subtended by a bract.</text>
</comment>
<comment type="similarity">
    <text evidence="18">Belongs to the plant 'ANKYRIN-BTB/POZ' family. 'NOOT-BOP-COCH-like' (NBCL) subfamily.</text>
</comment>
<name>NPR6_ARATH</name>
<accession>Q9M1I7</accession>
<keyword id="KW-0025">Alternative splicing</keyword>
<keyword id="KW-0040">ANK repeat</keyword>
<keyword id="KW-0963">Cytoplasm</keyword>
<keyword id="KW-0479">Metal-binding</keyword>
<keyword id="KW-0539">Nucleus</keyword>
<keyword id="KW-1185">Reference proteome</keyword>
<keyword id="KW-0677">Repeat</keyword>
<keyword id="KW-0833">Ubl conjugation pathway</keyword>
<keyword id="KW-0862">Zinc</keyword>
<keyword id="KW-0863">Zinc-finger</keyword>
<proteinExistence type="evidence at protein level"/>
<feature type="chain" id="PRO_0000407995" description="Regulatory protein NPR6">
    <location>
        <begin position="1"/>
        <end position="467"/>
    </location>
</feature>
<feature type="domain" description="BTB" evidence="3">
    <location>
        <begin position="27"/>
        <end position="111"/>
    </location>
</feature>
<feature type="repeat" description="ANK 1" evidence="2">
    <location>
        <begin position="247"/>
        <end position="276"/>
    </location>
</feature>
<feature type="repeat" description="ANK 2" evidence="2">
    <location>
        <begin position="277"/>
        <end position="306"/>
    </location>
</feature>
<feature type="repeat" description="ANK 3" evidence="2">
    <location>
        <begin position="311"/>
        <end position="340"/>
    </location>
</feature>
<feature type="repeat" description="ANK 4" evidence="18">
    <location>
        <begin position="344"/>
        <end position="378"/>
    </location>
</feature>
<feature type="zinc finger region" description="C2HC NPR-type" evidence="4">
    <location>
        <begin position="117"/>
        <end position="131"/>
    </location>
</feature>
<feature type="region of interest" description="Disordered" evidence="5">
    <location>
        <begin position="434"/>
        <end position="467"/>
    </location>
</feature>
<feature type="compositionally biased region" description="Basic residues" evidence="5">
    <location>
        <begin position="449"/>
        <end position="467"/>
    </location>
</feature>
<feature type="binding site" evidence="4">
    <location>
        <position position="120"/>
    </location>
    <ligand>
        <name>Zn(2+)</name>
        <dbReference type="ChEBI" id="CHEBI:29105"/>
    </ligand>
</feature>
<feature type="binding site" evidence="4">
    <location>
        <position position="125"/>
    </location>
    <ligand>
        <name>Zn(2+)</name>
        <dbReference type="ChEBI" id="CHEBI:29105"/>
    </ligand>
</feature>
<feature type="binding site" evidence="4">
    <location>
        <position position="127"/>
    </location>
    <ligand>
        <name>Zn(2+)</name>
        <dbReference type="ChEBI" id="CHEBI:29105"/>
    </ligand>
</feature>
<feature type="binding site" evidence="4">
    <location>
        <position position="130"/>
    </location>
    <ligand>
        <name>Zn(2+)</name>
        <dbReference type="ChEBI" id="CHEBI:29105"/>
    </ligand>
</feature>
<organism>
    <name type="scientific">Arabidopsis thaliana</name>
    <name type="common">Mouse-ear cress</name>
    <dbReference type="NCBI Taxonomy" id="3702"/>
    <lineage>
        <taxon>Eukaryota</taxon>
        <taxon>Viridiplantae</taxon>
        <taxon>Streptophyta</taxon>
        <taxon>Embryophyta</taxon>
        <taxon>Tracheophyta</taxon>
        <taxon>Spermatophyta</taxon>
        <taxon>Magnoliopsida</taxon>
        <taxon>eudicotyledons</taxon>
        <taxon>Gunneridae</taxon>
        <taxon>Pentapetalae</taxon>
        <taxon>rosids</taxon>
        <taxon>malvids</taxon>
        <taxon>Brassicales</taxon>
        <taxon>Brassicaceae</taxon>
        <taxon>Camelineae</taxon>
        <taxon>Arabidopsis</taxon>
    </lineage>
</organism>
<evidence type="ECO:0000250" key="1">
    <source>
        <dbReference type="UniProtKB" id="O22286"/>
    </source>
</evidence>
<evidence type="ECO:0000255" key="2"/>
<evidence type="ECO:0000255" key="3">
    <source>
        <dbReference type="PROSITE-ProRule" id="PRU00037"/>
    </source>
</evidence>
<evidence type="ECO:0000255" key="4">
    <source>
        <dbReference type="PROSITE-ProRule" id="PRU01391"/>
    </source>
</evidence>
<evidence type="ECO:0000256" key="5">
    <source>
        <dbReference type="SAM" id="MobiDB-lite"/>
    </source>
</evidence>
<evidence type="ECO:0000269" key="6">
    <source>
    </source>
</evidence>
<evidence type="ECO:0000269" key="7">
    <source>
    </source>
</evidence>
<evidence type="ECO:0000269" key="8">
    <source>
    </source>
</evidence>
<evidence type="ECO:0000269" key="9">
    <source>
    </source>
</evidence>
<evidence type="ECO:0000269" key="10">
    <source>
    </source>
</evidence>
<evidence type="ECO:0000269" key="11">
    <source>
    </source>
</evidence>
<evidence type="ECO:0000269" key="12">
    <source>
    </source>
</evidence>
<evidence type="ECO:0000269" key="13">
    <source>
    </source>
</evidence>
<evidence type="ECO:0000269" key="14">
    <source>
    </source>
</evidence>
<evidence type="ECO:0000269" key="15">
    <source>
    </source>
</evidence>
<evidence type="ECO:0000303" key="16">
    <source>
    </source>
</evidence>
<evidence type="ECO:0000303" key="17">
    <source>
    </source>
</evidence>
<evidence type="ECO:0000305" key="18"/>
<evidence type="ECO:0000312" key="19">
    <source>
        <dbReference type="Araport" id="AT3G57130"/>
    </source>
</evidence>
<evidence type="ECO:0000312" key="20">
    <source>
        <dbReference type="EMBL" id="CAB72183.1"/>
    </source>
</evidence>
<dbReference type="EMBL" id="AL138655">
    <property type="protein sequence ID" value="CAB72183.1"/>
    <property type="molecule type" value="Genomic_DNA"/>
</dbReference>
<dbReference type="EMBL" id="CP002686">
    <property type="protein sequence ID" value="AEE79617.1"/>
    <property type="molecule type" value="Genomic_DNA"/>
</dbReference>
<dbReference type="EMBL" id="DQ056629">
    <property type="protein sequence ID" value="AAY78777.1"/>
    <property type="molecule type" value="mRNA"/>
</dbReference>
<dbReference type="EMBL" id="BT026363">
    <property type="protein sequence ID" value="ABH04470.1"/>
    <property type="molecule type" value="mRNA"/>
</dbReference>
<dbReference type="EMBL" id="AB493655">
    <property type="protein sequence ID" value="BAH30493.1"/>
    <property type="molecule type" value="mRNA"/>
</dbReference>
<dbReference type="PIR" id="T47773">
    <property type="entry name" value="T47773"/>
</dbReference>
<dbReference type="RefSeq" id="NP_191272.1">
    <molecule id="Q9M1I7-1"/>
    <property type="nucleotide sequence ID" value="NM_115572.2"/>
</dbReference>
<dbReference type="SMR" id="Q9M1I7"/>
<dbReference type="BioGRID" id="10196">
    <property type="interactions" value="3"/>
</dbReference>
<dbReference type="FunCoup" id="Q9M1I7">
    <property type="interactions" value="296"/>
</dbReference>
<dbReference type="STRING" id="3702.Q9M1I7"/>
<dbReference type="PaxDb" id="3702-AT3G57130.1"/>
<dbReference type="ProteomicsDB" id="250545">
    <molecule id="Q9M1I7-1"/>
</dbReference>
<dbReference type="EnsemblPlants" id="AT3G57130.1">
    <molecule id="Q9M1I7-1"/>
    <property type="protein sequence ID" value="AT3G57130.1"/>
    <property type="gene ID" value="AT3G57130"/>
</dbReference>
<dbReference type="GeneID" id="824880"/>
<dbReference type="Gramene" id="AT3G57130.1">
    <molecule id="Q9M1I7-1"/>
    <property type="protein sequence ID" value="AT3G57130.1"/>
    <property type="gene ID" value="AT3G57130"/>
</dbReference>
<dbReference type="KEGG" id="ath:AT3G57130"/>
<dbReference type="Araport" id="AT3G57130"/>
<dbReference type="TAIR" id="AT3G57130">
    <property type="gene designation" value="BOP1"/>
</dbReference>
<dbReference type="eggNOG" id="KOG0504">
    <property type="taxonomic scope" value="Eukaryota"/>
</dbReference>
<dbReference type="HOGENOM" id="CLU_028148_0_0_1"/>
<dbReference type="InParanoid" id="Q9M1I7"/>
<dbReference type="OMA" id="RMKDEHT"/>
<dbReference type="OrthoDB" id="45365at2759"/>
<dbReference type="PhylomeDB" id="Q9M1I7"/>
<dbReference type="UniPathway" id="UPA00143"/>
<dbReference type="PRO" id="PR:Q9M1I7"/>
<dbReference type="Proteomes" id="UP000006548">
    <property type="component" value="Chromosome 3"/>
</dbReference>
<dbReference type="ExpressionAtlas" id="Q9M1I7">
    <property type="expression patterns" value="baseline and differential"/>
</dbReference>
<dbReference type="GO" id="GO:0005737">
    <property type="term" value="C:cytoplasm"/>
    <property type="evidence" value="ECO:0000314"/>
    <property type="project" value="TAIR"/>
</dbReference>
<dbReference type="GO" id="GO:0005634">
    <property type="term" value="C:nucleus"/>
    <property type="evidence" value="ECO:0000314"/>
    <property type="project" value="TAIR"/>
</dbReference>
<dbReference type="GO" id="GO:0008270">
    <property type="term" value="F:zinc ion binding"/>
    <property type="evidence" value="ECO:0007669"/>
    <property type="project" value="UniProtKB-KW"/>
</dbReference>
<dbReference type="GO" id="GO:0010434">
    <property type="term" value="P:bract formation"/>
    <property type="evidence" value="ECO:0000316"/>
    <property type="project" value="UniProtKB"/>
</dbReference>
<dbReference type="GO" id="GO:0010582">
    <property type="term" value="P:floral meristem determinacy"/>
    <property type="evidence" value="ECO:0000316"/>
    <property type="project" value="TAIR"/>
</dbReference>
<dbReference type="GO" id="GO:0010227">
    <property type="term" value="P:floral organ abscission"/>
    <property type="evidence" value="ECO:0000316"/>
    <property type="project" value="UniProtKB"/>
</dbReference>
<dbReference type="GO" id="GO:0048439">
    <property type="term" value="P:flower morphogenesis"/>
    <property type="evidence" value="ECO:0000316"/>
    <property type="project" value="TAIR"/>
</dbReference>
<dbReference type="GO" id="GO:0009864">
    <property type="term" value="P:induced systemic resistance, jasmonic acid mediated signaling pathway"/>
    <property type="evidence" value="ECO:0000316"/>
    <property type="project" value="TAIR"/>
</dbReference>
<dbReference type="GO" id="GO:0009965">
    <property type="term" value="P:leaf morphogenesis"/>
    <property type="evidence" value="ECO:0000315"/>
    <property type="project" value="UniProtKB"/>
</dbReference>
<dbReference type="GO" id="GO:0010022">
    <property type="term" value="P:meristem determinacy"/>
    <property type="evidence" value="ECO:0000315"/>
    <property type="project" value="TAIR"/>
</dbReference>
<dbReference type="GO" id="GO:0010254">
    <property type="term" value="P:nectary development"/>
    <property type="evidence" value="ECO:0000316"/>
    <property type="project" value="TAIR"/>
</dbReference>
<dbReference type="GO" id="GO:0009944">
    <property type="term" value="P:polarity specification of adaxial/abaxial axis"/>
    <property type="evidence" value="ECO:0000316"/>
    <property type="project" value="TAIR"/>
</dbReference>
<dbReference type="GO" id="GO:0016567">
    <property type="term" value="P:protein ubiquitination"/>
    <property type="evidence" value="ECO:0007669"/>
    <property type="project" value="UniProtKB-UniPathway"/>
</dbReference>
<dbReference type="GO" id="GO:0009954">
    <property type="term" value="P:proximal/distal pattern formation"/>
    <property type="evidence" value="ECO:0000316"/>
    <property type="project" value="TAIR"/>
</dbReference>
<dbReference type="CDD" id="cd18310">
    <property type="entry name" value="BTB_POZ_NPR_plant"/>
    <property type="match status" value="1"/>
</dbReference>
<dbReference type="FunFam" id="3.30.710.10:FF:000084">
    <property type="entry name" value="regulatory protein NPR5 isoform X1"/>
    <property type="match status" value="1"/>
</dbReference>
<dbReference type="FunFam" id="1.25.40.20:FF:000058">
    <property type="entry name" value="regulatory protein NPR5 isoform X2"/>
    <property type="match status" value="1"/>
</dbReference>
<dbReference type="Gene3D" id="1.25.40.20">
    <property type="entry name" value="Ankyrin repeat-containing domain"/>
    <property type="match status" value="1"/>
</dbReference>
<dbReference type="Gene3D" id="3.30.710.10">
    <property type="entry name" value="Potassium Channel Kv1.1, Chain A"/>
    <property type="match status" value="1"/>
</dbReference>
<dbReference type="InterPro" id="IPR002110">
    <property type="entry name" value="Ankyrin_rpt"/>
</dbReference>
<dbReference type="InterPro" id="IPR036770">
    <property type="entry name" value="Ankyrin_rpt-contain_sf"/>
</dbReference>
<dbReference type="InterPro" id="IPR000210">
    <property type="entry name" value="BTB/POZ_dom"/>
</dbReference>
<dbReference type="InterPro" id="IPR044284">
    <property type="entry name" value="NPR5/6"/>
</dbReference>
<dbReference type="InterPro" id="IPR024228">
    <property type="entry name" value="NPR_central_dom"/>
</dbReference>
<dbReference type="InterPro" id="IPR011333">
    <property type="entry name" value="SKP1/BTB/POZ_sf"/>
</dbReference>
<dbReference type="PANTHER" id="PTHR46668">
    <property type="entry name" value="BTB/POZ DOMAIN AND ANKYRIN REPEAT-CONTAINING PROTEIN NH5.2"/>
    <property type="match status" value="1"/>
</dbReference>
<dbReference type="PANTHER" id="PTHR46668:SF5">
    <property type="entry name" value="REGULATORY PROTEIN NPR6"/>
    <property type="match status" value="1"/>
</dbReference>
<dbReference type="Pfam" id="PF12796">
    <property type="entry name" value="Ank_2"/>
    <property type="match status" value="1"/>
</dbReference>
<dbReference type="Pfam" id="PF00651">
    <property type="entry name" value="BTB"/>
    <property type="match status" value="1"/>
</dbReference>
<dbReference type="Pfam" id="PF11900">
    <property type="entry name" value="DUF3420"/>
    <property type="match status" value="1"/>
</dbReference>
<dbReference type="SMART" id="SM00248">
    <property type="entry name" value="ANK"/>
    <property type="match status" value="2"/>
</dbReference>
<dbReference type="SMART" id="SM00225">
    <property type="entry name" value="BTB"/>
    <property type="match status" value="1"/>
</dbReference>
<dbReference type="SUPFAM" id="SSF48403">
    <property type="entry name" value="Ankyrin repeat"/>
    <property type="match status" value="1"/>
</dbReference>
<dbReference type="SUPFAM" id="SSF54695">
    <property type="entry name" value="POZ domain"/>
    <property type="match status" value="1"/>
</dbReference>
<dbReference type="PROSITE" id="PS50297">
    <property type="entry name" value="ANK_REP_REGION"/>
    <property type="match status" value="1"/>
</dbReference>
<dbReference type="PROSITE" id="PS50088">
    <property type="entry name" value="ANK_REPEAT"/>
    <property type="match status" value="1"/>
</dbReference>
<dbReference type="PROSITE" id="PS50097">
    <property type="entry name" value="BTB"/>
    <property type="match status" value="1"/>
</dbReference>
<dbReference type="PROSITE" id="PS52046">
    <property type="entry name" value="ZF_C2HC_NPR"/>
    <property type="match status" value="1"/>
</dbReference>
<reference key="1">
    <citation type="journal article" date="2000" name="Nature">
        <title>Sequence and analysis of chromosome 3 of the plant Arabidopsis thaliana.</title>
        <authorList>
            <person name="Salanoubat M."/>
            <person name="Lemcke K."/>
            <person name="Rieger M."/>
            <person name="Ansorge W."/>
            <person name="Unseld M."/>
            <person name="Fartmann B."/>
            <person name="Valle G."/>
            <person name="Bloecker H."/>
            <person name="Perez-Alonso M."/>
            <person name="Obermaier B."/>
            <person name="Delseny M."/>
            <person name="Boutry M."/>
            <person name="Grivell L.A."/>
            <person name="Mache R."/>
            <person name="Puigdomenech P."/>
            <person name="De Simone V."/>
            <person name="Choisne N."/>
            <person name="Artiguenave F."/>
            <person name="Robert C."/>
            <person name="Brottier P."/>
            <person name="Wincker P."/>
            <person name="Cattolico L."/>
            <person name="Weissenbach J."/>
            <person name="Saurin W."/>
            <person name="Quetier F."/>
            <person name="Schaefer M."/>
            <person name="Mueller-Auer S."/>
            <person name="Gabel C."/>
            <person name="Fuchs M."/>
            <person name="Benes V."/>
            <person name="Wurmbach E."/>
            <person name="Drzonek H."/>
            <person name="Erfle H."/>
            <person name="Jordan N."/>
            <person name="Bangert S."/>
            <person name="Wiedelmann R."/>
            <person name="Kranz H."/>
            <person name="Voss H."/>
            <person name="Holland R."/>
            <person name="Brandt P."/>
            <person name="Nyakatura G."/>
            <person name="Vezzi A."/>
            <person name="D'Angelo M."/>
            <person name="Pallavicini A."/>
            <person name="Toppo S."/>
            <person name="Simionati B."/>
            <person name="Conrad A."/>
            <person name="Hornischer K."/>
            <person name="Kauer G."/>
            <person name="Loehnert T.-H."/>
            <person name="Nordsiek G."/>
            <person name="Reichelt J."/>
            <person name="Scharfe M."/>
            <person name="Schoen O."/>
            <person name="Bargues M."/>
            <person name="Terol J."/>
            <person name="Climent J."/>
            <person name="Navarro P."/>
            <person name="Collado C."/>
            <person name="Perez-Perez A."/>
            <person name="Ottenwaelder B."/>
            <person name="Duchemin D."/>
            <person name="Cooke R."/>
            <person name="Laudie M."/>
            <person name="Berger-Llauro C."/>
            <person name="Purnelle B."/>
            <person name="Masuy D."/>
            <person name="de Haan M."/>
            <person name="Maarse A.C."/>
            <person name="Alcaraz J.-P."/>
            <person name="Cottet A."/>
            <person name="Casacuberta E."/>
            <person name="Monfort A."/>
            <person name="Argiriou A."/>
            <person name="Flores M."/>
            <person name="Liguori R."/>
            <person name="Vitale D."/>
            <person name="Mannhaupt G."/>
            <person name="Haase D."/>
            <person name="Schoof H."/>
            <person name="Rudd S."/>
            <person name="Zaccaria P."/>
            <person name="Mewes H.-W."/>
            <person name="Mayer K.F.X."/>
            <person name="Kaul S."/>
            <person name="Town C.D."/>
            <person name="Koo H.L."/>
            <person name="Tallon L.J."/>
            <person name="Jenkins J."/>
            <person name="Rooney T."/>
            <person name="Rizzo M."/>
            <person name="Walts A."/>
            <person name="Utterback T."/>
            <person name="Fujii C.Y."/>
            <person name="Shea T.P."/>
            <person name="Creasy T.H."/>
            <person name="Haas B."/>
            <person name="Maiti R."/>
            <person name="Wu D."/>
            <person name="Peterson J."/>
            <person name="Van Aken S."/>
            <person name="Pai G."/>
            <person name="Militscher J."/>
            <person name="Sellers P."/>
            <person name="Gill J.E."/>
            <person name="Feldblyum T.V."/>
            <person name="Preuss D."/>
            <person name="Lin X."/>
            <person name="Nierman W.C."/>
            <person name="Salzberg S.L."/>
            <person name="White O."/>
            <person name="Venter J.C."/>
            <person name="Fraser C.M."/>
            <person name="Kaneko T."/>
            <person name="Nakamura Y."/>
            <person name="Sato S."/>
            <person name="Kato T."/>
            <person name="Asamizu E."/>
            <person name="Sasamoto S."/>
            <person name="Kimura T."/>
            <person name="Idesawa K."/>
            <person name="Kawashima K."/>
            <person name="Kishida Y."/>
            <person name="Kiyokawa C."/>
            <person name="Kohara M."/>
            <person name="Matsumoto M."/>
            <person name="Matsuno A."/>
            <person name="Muraki A."/>
            <person name="Nakayama S."/>
            <person name="Nakazaki N."/>
            <person name="Shinpo S."/>
            <person name="Takeuchi C."/>
            <person name="Wada T."/>
            <person name="Watanabe A."/>
            <person name="Yamada M."/>
            <person name="Yasuda M."/>
            <person name="Tabata S."/>
        </authorList>
    </citation>
    <scope>NUCLEOTIDE SEQUENCE [LARGE SCALE GENOMIC DNA]</scope>
    <source>
        <strain>cv. Columbia</strain>
    </source>
</reference>
<reference key="2">
    <citation type="journal article" date="2017" name="Plant J.">
        <title>Araport11: a complete reannotation of the Arabidopsis thaliana reference genome.</title>
        <authorList>
            <person name="Cheng C.Y."/>
            <person name="Krishnakumar V."/>
            <person name="Chan A.P."/>
            <person name="Thibaud-Nissen F."/>
            <person name="Schobel S."/>
            <person name="Town C.D."/>
        </authorList>
    </citation>
    <scope>GENOME REANNOTATION</scope>
    <source>
        <strain>cv. Columbia</strain>
    </source>
</reference>
<reference key="3">
    <citation type="submission" date="2005-05" db="EMBL/GenBank/DDBJ databases">
        <authorList>
            <person name="Underwood B.A."/>
            <person name="Xiao Y.-L."/>
            <person name="Moskal W.A. Jr."/>
            <person name="Monaghan E.L."/>
            <person name="Wang W."/>
            <person name="Redman J.C."/>
            <person name="Wu H.C."/>
            <person name="Utterback T."/>
            <person name="Town C.D."/>
        </authorList>
    </citation>
    <scope>NUCLEOTIDE SEQUENCE [LARGE SCALE MRNA]</scope>
    <source>
        <strain>cv. Columbia</strain>
    </source>
</reference>
<reference key="4">
    <citation type="submission" date="2006-08" db="EMBL/GenBank/DDBJ databases">
        <title>Arabidopsis ORF Clones.</title>
        <authorList>
            <person name="Quinitio C."/>
            <person name="Chen H."/>
            <person name="Kim C.J."/>
            <person name="Shinn P."/>
            <person name="Ecker J.R."/>
        </authorList>
    </citation>
    <scope>NUCLEOTIDE SEQUENCE [LARGE SCALE MRNA]</scope>
    <source>
        <strain>cv. Columbia</strain>
    </source>
</reference>
<reference key="5">
    <citation type="submission" date="2009-03" db="EMBL/GenBank/DDBJ databases">
        <title>ORF cloning and analysis of Arabidopsis transcription factor genes.</title>
        <authorList>
            <person name="Fujita M."/>
            <person name="Mizukado S."/>
            <person name="Seki M."/>
            <person name="Shinozaki K."/>
            <person name="Mitsuda N."/>
            <person name="Takiguchi Y."/>
            <person name="Takagi M."/>
        </authorList>
    </citation>
    <scope>NUCLEOTIDE SEQUENCE [LARGE SCALE MRNA]</scope>
</reference>
<reference key="6">
    <citation type="journal article" date="2003" name="Development">
        <title>The BLADE-ON-PETIOLE 1 gene controls leaf pattern formation through the modulation of meristematic activity in Arabidopsis.</title>
        <authorList>
            <person name="Ha C.M."/>
            <person name="Kim G.T."/>
            <person name="Kim B.C."/>
            <person name="Jun J.H."/>
            <person name="Soh M.S."/>
            <person name="Ueno Y."/>
            <person name="Machida Y."/>
            <person name="Tsukaya H."/>
            <person name="Nam H.G."/>
        </authorList>
    </citation>
    <scope>FUNCTION</scope>
</reference>
<reference key="7">
    <citation type="journal article" date="2004" name="Plant Cell Physiol.">
        <title>BLADE-ON-PETIOLE1 encodes a BTB/POZ domain protein required for leaf morphogenesis in Arabidopsis thaliana.</title>
        <authorList>
            <person name="Ha C.M."/>
            <person name="Jun J.H."/>
            <person name="Nam H.G."/>
            <person name="Fletcher J.C."/>
        </authorList>
    </citation>
    <scope>FUNCTION</scope>
    <scope>DEVELOPMENTAL STAGE</scope>
</reference>
<reference key="8">
    <citation type="journal article" date="2005" name="Development">
        <title>The BLADE ON PETIOLE genes act redundantly to control the growth and development of lateral organs.</title>
        <authorList>
            <person name="Norberg M."/>
            <person name="Holmlund M."/>
            <person name="Nilsson O."/>
        </authorList>
    </citation>
    <scope>FUNCTION</scope>
    <scope>DISRUPTION PHENOTYPE</scope>
</reference>
<reference key="9">
    <citation type="journal article" date="2005" name="J. Biol. Chem.">
        <title>Cullins 3a and 3b assemble with members of the broad complex/tramtrack/bric-a-brac (BTB) protein family to form essential ubiquitin-protein ligases (E3s) in Arabidopsis.</title>
        <authorList>
            <person name="Gingerich D.J."/>
            <person name="Gagne J.M."/>
            <person name="Salter D.W."/>
            <person name="Hellmann H."/>
            <person name="Estelle M."/>
            <person name="Ma L."/>
            <person name="Vierstra R.D."/>
        </authorList>
    </citation>
    <scope>DOMAIN BTB</scope>
</reference>
<reference key="10">
    <citation type="journal article" date="2005" name="Plant Cell">
        <title>BLADE-ON-PETIOLE-dependent signaling controls leaf and floral patterning in Arabidopsis.</title>
        <authorList>
            <person name="Hepworth S.R."/>
            <person name="Zhang Y."/>
            <person name="McKim S."/>
            <person name="Li X."/>
            <person name="Haughn G.W."/>
        </authorList>
    </citation>
    <scope>FUNCTION</scope>
    <scope>DISRUPTION PHENOTYPE</scope>
    <scope>INTERACTION WITH PAN</scope>
</reference>
<reference key="11">
    <citation type="journal article" date="2005" name="Plant J.">
        <title>An Arabidopsis NPR1-like gene, NPR4, is required for disease resistance.</title>
        <authorList>
            <person name="Liu G."/>
            <person name="Holub E.B."/>
            <person name="Alonso J.M."/>
            <person name="Ecker J.R."/>
            <person name="Fobert P.R."/>
        </authorList>
    </citation>
    <scope>GENE FAMILY</scope>
    <scope>NOMENCLATURE</scope>
</reference>
<reference key="12">
    <citation type="journal article" date="2007" name="Plant Cell">
        <title>BLADE-ON-PETIOLE 1 and 2 control Arabidopsis lateral organ fate through regulation of LOB domain and adaxial-abaxial polarity genes.</title>
        <authorList>
            <person name="Ha C.M."/>
            <person name="Jun J.H."/>
            <person name="Nam H.G."/>
            <person name="Fletcher J.C."/>
        </authorList>
    </citation>
    <scope>FUNCTION</scope>
    <scope>DISRUPTION PHENOTYPE</scope>
</reference>
<reference key="13">
    <citation type="journal article" date="2008" name="Development">
        <title>The BLADE-ON-PETIOLE genes are essential for abscission zone formation in Arabidopsis.</title>
        <authorList>
            <person name="McKim S.M."/>
            <person name="Stenvik G.E."/>
            <person name="Butenko M.A."/>
            <person name="Kristiansen W."/>
            <person name="Cho S.K."/>
            <person name="Hepworth S.R."/>
            <person name="Aalen R.B."/>
            <person name="Haughn G.W."/>
        </authorList>
    </citation>
    <scope>FUNCTION</scope>
    <scope>DISRUPTION PHENOTYPE</scope>
</reference>
<reference key="14">
    <citation type="journal article" date="2010" name="Genetics">
        <title>Control of Arabidopsis leaf morphogenesis through regulation of the YABBY and KNOX families of transcription factors.</title>
        <authorList>
            <person name="Ha C.M."/>
            <person name="Jun J.H."/>
            <person name="Fletcher J.C."/>
        </authorList>
    </citation>
    <scope>FUNCTION</scope>
</reference>
<reference key="15">
    <citation type="journal article" date="2010" name="Plant Cell">
        <title>BLADE-ON-PETIOLE1 coordinates organ determinacy and axial polarity in arabidopsis by directly activating ASYMMETRIC LEAVES2.</title>
        <authorList>
            <person name="Jun J.H."/>
            <person name="Ha C.M."/>
            <person name="Fletcher J.C."/>
        </authorList>
    </citation>
    <scope>FUNCTION</scope>
    <scope>SUBCELLULAR LOCATION</scope>
    <scope>SUBUNIT</scope>
</reference>
<reference key="16">
    <citation type="journal article" date="2010" name="Plant J.">
        <title>Arabidopsis BLADE-ON-PETIOLE1 and 2 promote floral meristem fate and determinacy in a previously undefined pathway targeting APETALA1 and AGAMOUS-LIKE24.</title>
        <authorList>
            <person name="Xu M."/>
            <person name="Hu T."/>
            <person name="McKim S.M."/>
            <person name="Murmu J."/>
            <person name="Haughn G.W."/>
            <person name="Hepworth S.R."/>
        </authorList>
    </citation>
    <scope>FUNCTION</scope>
</reference>